<organism>
    <name type="scientific">Erwinia tasmaniensis (strain DSM 17950 / CFBP 7177 / CIP 109463 / NCPPB 4357 / Et1/99)</name>
    <dbReference type="NCBI Taxonomy" id="465817"/>
    <lineage>
        <taxon>Bacteria</taxon>
        <taxon>Pseudomonadati</taxon>
        <taxon>Pseudomonadota</taxon>
        <taxon>Gammaproteobacteria</taxon>
        <taxon>Enterobacterales</taxon>
        <taxon>Erwiniaceae</taxon>
        <taxon>Erwinia</taxon>
    </lineage>
</organism>
<name>GSA_ERWT9</name>
<reference key="1">
    <citation type="journal article" date="2008" name="Environ. Microbiol.">
        <title>The genome of Erwinia tasmaniensis strain Et1/99, a non-pathogenic bacterium in the genus Erwinia.</title>
        <authorList>
            <person name="Kube M."/>
            <person name="Migdoll A.M."/>
            <person name="Mueller I."/>
            <person name="Kuhl H."/>
            <person name="Beck A."/>
            <person name="Reinhardt R."/>
            <person name="Geider K."/>
        </authorList>
    </citation>
    <scope>NUCLEOTIDE SEQUENCE [LARGE SCALE GENOMIC DNA]</scope>
    <source>
        <strain>DSM 17950 / CFBP 7177 / CIP 109463 / NCPPB 4357 / Et1/99</strain>
    </source>
</reference>
<comment type="catalytic activity">
    <reaction evidence="1">
        <text>(S)-4-amino-5-oxopentanoate = 5-aminolevulinate</text>
        <dbReference type="Rhea" id="RHEA:14265"/>
        <dbReference type="ChEBI" id="CHEBI:57501"/>
        <dbReference type="ChEBI" id="CHEBI:356416"/>
        <dbReference type="EC" id="5.4.3.8"/>
    </reaction>
</comment>
<comment type="cofactor">
    <cofactor evidence="1">
        <name>pyridoxal 5'-phosphate</name>
        <dbReference type="ChEBI" id="CHEBI:597326"/>
    </cofactor>
</comment>
<comment type="pathway">
    <text evidence="1">Porphyrin-containing compound metabolism; protoporphyrin-IX biosynthesis; 5-aminolevulinate from L-glutamyl-tRNA(Glu): step 2/2.</text>
</comment>
<comment type="subunit">
    <text evidence="1">Homodimer.</text>
</comment>
<comment type="subcellular location">
    <subcellularLocation>
        <location evidence="1">Cytoplasm</location>
    </subcellularLocation>
</comment>
<comment type="similarity">
    <text evidence="1">Belongs to the class-III pyridoxal-phosphate-dependent aminotransferase family. HemL subfamily.</text>
</comment>
<accession>B2VE25</accession>
<proteinExistence type="inferred from homology"/>
<feature type="chain" id="PRO_1000121887" description="Glutamate-1-semialdehyde 2,1-aminomutase">
    <location>
        <begin position="1"/>
        <end position="426"/>
    </location>
</feature>
<feature type="modified residue" description="N6-(pyridoxal phosphate)lysine" evidence="1">
    <location>
        <position position="265"/>
    </location>
</feature>
<evidence type="ECO:0000255" key="1">
    <source>
        <dbReference type="HAMAP-Rule" id="MF_00375"/>
    </source>
</evidence>
<protein>
    <recommendedName>
        <fullName evidence="1">Glutamate-1-semialdehyde 2,1-aminomutase</fullName>
        <shortName evidence="1">GSA</shortName>
        <ecNumber evidence="1">5.4.3.8</ecNumber>
    </recommendedName>
    <alternativeName>
        <fullName evidence="1">Glutamate-1-semialdehyde aminotransferase</fullName>
        <shortName evidence="1">GSA-AT</shortName>
    </alternativeName>
</protein>
<sequence>MSKSENLYAQAQQLIPGGVNSPVRAFNGVGGVPLFIERANGAYLYDADGKAYIDYVGSWGPMVLGHNHPAIRNAVIDAAERGLSFGAPTEMEVKMAALVTELVPTMDMVRMVNSGTEATMSAIRLARGFTHRDKIIKFEGCYHGHADCLLVKAGSGALTLGQPNSPGVPADFAKHTLTCTYNDLASVRAAFEQYPQEIACIIVEPVAGNMNCVPPLPDFLPGLRALCDEFDALLIIDEVMTGFRVALAGAQAHYGVEPDLTCLGKIIGGGMPVGAFGGRREVMEALAPGGPVYQAGTLSGNPIAMAAGFACLTEVAQPGTHATLTELTNQLADGLLAAAKAENIPLVVNHVGGMFGLFFTDAASVTRYADVIRCDVERFKRFFHLMLAEGVYLAPSAFEAGFMSLAHGQAEIQHTIDAARRSFAKL</sequence>
<keyword id="KW-0963">Cytoplasm</keyword>
<keyword id="KW-0413">Isomerase</keyword>
<keyword id="KW-0627">Porphyrin biosynthesis</keyword>
<keyword id="KW-0663">Pyridoxal phosphate</keyword>
<keyword id="KW-1185">Reference proteome</keyword>
<dbReference type="EC" id="5.4.3.8" evidence="1"/>
<dbReference type="EMBL" id="CU468135">
    <property type="protein sequence ID" value="CAO95925.1"/>
    <property type="molecule type" value="Genomic_DNA"/>
</dbReference>
<dbReference type="RefSeq" id="WP_012440627.1">
    <property type="nucleotide sequence ID" value="NC_010694.1"/>
</dbReference>
<dbReference type="SMR" id="B2VE25"/>
<dbReference type="STRING" id="465817.ETA_08790"/>
<dbReference type="KEGG" id="eta:ETA_08790"/>
<dbReference type="eggNOG" id="COG0001">
    <property type="taxonomic scope" value="Bacteria"/>
</dbReference>
<dbReference type="HOGENOM" id="CLU_016922_1_5_6"/>
<dbReference type="OrthoDB" id="9801052at2"/>
<dbReference type="UniPathway" id="UPA00251">
    <property type="reaction ID" value="UER00317"/>
</dbReference>
<dbReference type="Proteomes" id="UP000001726">
    <property type="component" value="Chromosome"/>
</dbReference>
<dbReference type="GO" id="GO:0005737">
    <property type="term" value="C:cytoplasm"/>
    <property type="evidence" value="ECO:0007669"/>
    <property type="project" value="UniProtKB-SubCell"/>
</dbReference>
<dbReference type="GO" id="GO:0042286">
    <property type="term" value="F:glutamate-1-semialdehyde 2,1-aminomutase activity"/>
    <property type="evidence" value="ECO:0007669"/>
    <property type="project" value="UniProtKB-UniRule"/>
</dbReference>
<dbReference type="GO" id="GO:0030170">
    <property type="term" value="F:pyridoxal phosphate binding"/>
    <property type="evidence" value="ECO:0007669"/>
    <property type="project" value="InterPro"/>
</dbReference>
<dbReference type="GO" id="GO:0008483">
    <property type="term" value="F:transaminase activity"/>
    <property type="evidence" value="ECO:0007669"/>
    <property type="project" value="InterPro"/>
</dbReference>
<dbReference type="GO" id="GO:0006782">
    <property type="term" value="P:protoporphyrinogen IX biosynthetic process"/>
    <property type="evidence" value="ECO:0007669"/>
    <property type="project" value="UniProtKB-UniRule"/>
</dbReference>
<dbReference type="CDD" id="cd00610">
    <property type="entry name" value="OAT_like"/>
    <property type="match status" value="1"/>
</dbReference>
<dbReference type="FunFam" id="3.40.640.10:FF:000021">
    <property type="entry name" value="Glutamate-1-semialdehyde 2,1-aminomutase"/>
    <property type="match status" value="1"/>
</dbReference>
<dbReference type="FunFam" id="3.90.1150.10:FF:000012">
    <property type="entry name" value="Glutamate-1-semialdehyde 2,1-aminomutase"/>
    <property type="match status" value="1"/>
</dbReference>
<dbReference type="Gene3D" id="3.90.1150.10">
    <property type="entry name" value="Aspartate Aminotransferase, domain 1"/>
    <property type="match status" value="1"/>
</dbReference>
<dbReference type="Gene3D" id="3.40.640.10">
    <property type="entry name" value="Type I PLP-dependent aspartate aminotransferase-like (Major domain)"/>
    <property type="match status" value="1"/>
</dbReference>
<dbReference type="HAMAP" id="MF_00375">
    <property type="entry name" value="HemL_aminotrans_3"/>
    <property type="match status" value="1"/>
</dbReference>
<dbReference type="InterPro" id="IPR004639">
    <property type="entry name" value="4pyrrol_synth_GluAld_NH2Trfase"/>
</dbReference>
<dbReference type="InterPro" id="IPR005814">
    <property type="entry name" value="Aminotrans_3"/>
</dbReference>
<dbReference type="InterPro" id="IPR049704">
    <property type="entry name" value="Aminotrans_3_PPA_site"/>
</dbReference>
<dbReference type="InterPro" id="IPR015424">
    <property type="entry name" value="PyrdxlP-dep_Trfase"/>
</dbReference>
<dbReference type="InterPro" id="IPR015421">
    <property type="entry name" value="PyrdxlP-dep_Trfase_major"/>
</dbReference>
<dbReference type="InterPro" id="IPR015422">
    <property type="entry name" value="PyrdxlP-dep_Trfase_small"/>
</dbReference>
<dbReference type="NCBIfam" id="TIGR00713">
    <property type="entry name" value="hemL"/>
    <property type="match status" value="1"/>
</dbReference>
<dbReference type="NCBIfam" id="NF000818">
    <property type="entry name" value="PRK00062.1"/>
    <property type="match status" value="1"/>
</dbReference>
<dbReference type="PANTHER" id="PTHR43713">
    <property type="entry name" value="GLUTAMATE-1-SEMIALDEHYDE 2,1-AMINOMUTASE"/>
    <property type="match status" value="1"/>
</dbReference>
<dbReference type="PANTHER" id="PTHR43713:SF3">
    <property type="entry name" value="GLUTAMATE-1-SEMIALDEHYDE 2,1-AMINOMUTASE 1, CHLOROPLASTIC-RELATED"/>
    <property type="match status" value="1"/>
</dbReference>
<dbReference type="Pfam" id="PF00202">
    <property type="entry name" value="Aminotran_3"/>
    <property type="match status" value="1"/>
</dbReference>
<dbReference type="SUPFAM" id="SSF53383">
    <property type="entry name" value="PLP-dependent transferases"/>
    <property type="match status" value="1"/>
</dbReference>
<dbReference type="PROSITE" id="PS00600">
    <property type="entry name" value="AA_TRANSFER_CLASS_3"/>
    <property type="match status" value="1"/>
</dbReference>
<gene>
    <name evidence="1" type="primary">hemL</name>
    <name type="ordered locus">ETA_08790</name>
</gene>